<reference key="1">
    <citation type="journal article" date="2002" name="Lancet">
        <title>Genome and virulence determinants of high virulence community-acquired MRSA.</title>
        <authorList>
            <person name="Baba T."/>
            <person name="Takeuchi F."/>
            <person name="Kuroda M."/>
            <person name="Yuzawa H."/>
            <person name="Aoki K."/>
            <person name="Oguchi A."/>
            <person name="Nagai Y."/>
            <person name="Iwama N."/>
            <person name="Asano K."/>
            <person name="Naimi T."/>
            <person name="Kuroda H."/>
            <person name="Cui L."/>
            <person name="Yamamoto K."/>
            <person name="Hiramatsu K."/>
        </authorList>
    </citation>
    <scope>NUCLEOTIDE SEQUENCE [LARGE SCALE GENOMIC DNA]</scope>
    <source>
        <strain>MW2</strain>
    </source>
</reference>
<proteinExistence type="inferred from homology"/>
<sequence length="98" mass="11496">MQIELTDAAVTWFKNELELPENNKVLVFFVRYGGEFQLKQGFSPAFTVEPKEDVDIGYEQQYDDLNVVVAEKDLWYFEDDHIIVNVVDHEDEISYSTK</sequence>
<feature type="chain" id="PRO_0000300088" description="Uncharacterized protein MW1239">
    <location>
        <begin position="1"/>
        <end position="98"/>
    </location>
</feature>
<organism>
    <name type="scientific">Staphylococcus aureus (strain MW2)</name>
    <dbReference type="NCBI Taxonomy" id="196620"/>
    <lineage>
        <taxon>Bacteria</taxon>
        <taxon>Bacillati</taxon>
        <taxon>Bacillota</taxon>
        <taxon>Bacilli</taxon>
        <taxon>Bacillales</taxon>
        <taxon>Staphylococcaceae</taxon>
        <taxon>Staphylococcus</taxon>
    </lineage>
</organism>
<evidence type="ECO:0000305" key="1"/>
<protein>
    <recommendedName>
        <fullName>Uncharacterized protein MW1239</fullName>
    </recommendedName>
</protein>
<name>Y1239_STAAW</name>
<accession>Q7A0Y9</accession>
<dbReference type="EMBL" id="BA000033">
    <property type="protein sequence ID" value="BAB95104.1"/>
    <property type="molecule type" value="Genomic_DNA"/>
</dbReference>
<dbReference type="RefSeq" id="WP_001165377.1">
    <property type="nucleotide sequence ID" value="NC_003923.1"/>
</dbReference>
<dbReference type="SMR" id="Q7A0Y9"/>
<dbReference type="KEGG" id="sam:MW1239"/>
<dbReference type="HOGENOM" id="CLU_163967_0_0_9"/>
<dbReference type="InterPro" id="IPR035903">
    <property type="entry name" value="HesB-like_dom_sf"/>
</dbReference>
<dbReference type="InterPro" id="IPR008326">
    <property type="entry name" value="PdhI-like"/>
</dbReference>
<dbReference type="PIRSF" id="PIRSF034852">
    <property type="entry name" value="UCP034852"/>
    <property type="match status" value="1"/>
</dbReference>
<dbReference type="SUPFAM" id="SSF89360">
    <property type="entry name" value="HesB-like domain"/>
    <property type="match status" value="1"/>
</dbReference>
<gene>
    <name type="ordered locus">MW1239</name>
</gene>
<comment type="similarity">
    <text evidence="1">Belongs to the HesB/IscA family.</text>
</comment>